<dbReference type="EC" id="3.1.21.4" evidence="1"/>
<dbReference type="EMBL" id="U09581">
    <property type="protein sequence ID" value="AAC43324.1"/>
    <property type="molecule type" value="Genomic_DNA"/>
</dbReference>
<dbReference type="RefSeq" id="WP_030468110.1">
    <property type="nucleotide sequence ID" value="NZ_BBOJ01000008.1"/>
</dbReference>
<dbReference type="PDB" id="1EV7">
    <property type="method" value="X-ray"/>
    <property type="resolution" value="2.38 A"/>
    <property type="chains" value="A/B=1-317"/>
</dbReference>
<dbReference type="PDB" id="1IAW">
    <property type="method" value="X-ray"/>
    <property type="resolution" value="2.40 A"/>
    <property type="chains" value="A/B=1-317"/>
</dbReference>
<dbReference type="PDBsum" id="1EV7"/>
<dbReference type="PDBsum" id="1IAW"/>
<dbReference type="SMR" id="P50187"/>
<dbReference type="STRING" id="68170.GCA_000974445_06522"/>
<dbReference type="REBASE" id="1294">
    <property type="entry name" value="NaeI"/>
</dbReference>
<dbReference type="REBASE" id="165907">
    <property type="entry name" value="Nse506ORF6588P"/>
</dbReference>
<dbReference type="OrthoDB" id="9179812at2"/>
<dbReference type="EvolutionaryTrace" id="P50187"/>
<dbReference type="PRO" id="PR:P50187"/>
<dbReference type="GO" id="GO:0003677">
    <property type="term" value="F:DNA binding"/>
    <property type="evidence" value="ECO:0007669"/>
    <property type="project" value="InterPro"/>
</dbReference>
<dbReference type="GO" id="GO:0009036">
    <property type="term" value="F:type II site-specific deoxyribonuclease activity"/>
    <property type="evidence" value="ECO:0007669"/>
    <property type="project" value="UniProtKB-EC"/>
</dbReference>
<dbReference type="GO" id="GO:0009307">
    <property type="term" value="P:DNA restriction-modification system"/>
    <property type="evidence" value="ECO:0007669"/>
    <property type="project" value="UniProtKB-KW"/>
</dbReference>
<dbReference type="CDD" id="cd22338">
    <property type="entry name" value="NaeI-like"/>
    <property type="match status" value="1"/>
</dbReference>
<dbReference type="Gene3D" id="3.40.600.10">
    <property type="entry name" value="DNA mismatch repair MutH/Restriction endonuclease, type II"/>
    <property type="match status" value="1"/>
</dbReference>
<dbReference type="Gene3D" id="1.10.10.10">
    <property type="entry name" value="Winged helix-like DNA-binding domain superfamily/Winged helix DNA-binding domain"/>
    <property type="match status" value="1"/>
</dbReference>
<dbReference type="InterPro" id="IPR037057">
    <property type="entry name" value="DNA_rep_MutH/T2_RE_sf"/>
</dbReference>
<dbReference type="InterPro" id="IPR015210">
    <property type="entry name" value="NaeI"/>
</dbReference>
<dbReference type="InterPro" id="IPR011335">
    <property type="entry name" value="Restrct_endonuc-II-like"/>
</dbReference>
<dbReference type="InterPro" id="IPR036388">
    <property type="entry name" value="WH-like_DNA-bd_sf"/>
</dbReference>
<dbReference type="Pfam" id="PF09126">
    <property type="entry name" value="NaeI"/>
    <property type="match status" value="1"/>
</dbReference>
<dbReference type="SUPFAM" id="SSF52980">
    <property type="entry name" value="Restriction endonuclease-like"/>
    <property type="match status" value="1"/>
</dbReference>
<accession>P50187</accession>
<organism>
    <name type="scientific">Lentzea aerocolonigenes</name>
    <name type="common">Lechevalieria aerocolonigenes</name>
    <name type="synonym">Saccharothrix aerocolonigenes</name>
    <dbReference type="NCBI Taxonomy" id="68170"/>
    <lineage>
        <taxon>Bacteria</taxon>
        <taxon>Bacillati</taxon>
        <taxon>Actinomycetota</taxon>
        <taxon>Actinomycetes</taxon>
        <taxon>Pseudonocardiales</taxon>
        <taxon>Pseudonocardiaceae</taxon>
        <taxon>Lentzea</taxon>
    </lineage>
</organism>
<comment type="function">
    <text evidence="1 2 3">An E and P subtype restriction enzyme that recognizes the double-stranded unmethylated sequence 5'-GCCGGC-3' and cleaves after C-3.</text>
</comment>
<comment type="catalytic activity">
    <reaction evidence="1 2">
        <text>Endonucleolytic cleavage of DNA to give specific double-stranded fragments with terminal 5'-phosphates.</text>
        <dbReference type="EC" id="3.1.21.4"/>
    </reaction>
</comment>
<comment type="subunit">
    <text evidence="2">Homodimer.</text>
</comment>
<reference key="1">
    <citation type="journal article" date="1995" name="Gene">
        <title>Cloning and expression of the NaeI restriction endonuclease-encoding gene and sequence analysis of the NaeI restriction-modification system.</title>
        <authorList>
            <person name="Taron C.H."/>
            <person name="van Cott E.M."/>
            <person name="Wilson G.G."/>
            <person name="Moran L.S."/>
            <person name="Slatko B.E."/>
            <person name="Hornstra L.J."/>
            <person name="Benner J.S."/>
            <person name="Kucera R.B."/>
            <person name="Guthrie E.P."/>
        </authorList>
    </citation>
    <scope>NUCLEOTIDE SEQUENCE [GENOMIC DNA]</scope>
    <scope>FUNCTION</scope>
    <source>
        <strain>ATCC 23870 / DSM 40034 / BCRC 13661 / CBS 609.68 / CIP 107109 / JCM 4614 / KCTC 9379 / NBRC 13195 / NCIMB 12944 / NRRL B-3298 / 701</strain>
    </source>
</reference>
<reference key="2">
    <citation type="journal article" date="1995" name="Science">
        <title>DNA topoisomerase and recombinase activities in Nae I restriction endonuclease.</title>
        <authorList>
            <person name="Jo K."/>
            <person name="Topal M.D."/>
        </authorList>
    </citation>
    <scope>FUNCTION</scope>
    <scope>MUTAGENESIS OF LEU-43</scope>
</reference>
<reference key="3">
    <citation type="journal article" date="1996" name="Nucleic Acids Res.">
        <title>Effects on NaeI-DNA recognition of the leucine to lysine substitution that transforms restriction endonuclease NaeI to a topoisomerase: a model for restriction endonuclease evolution.</title>
        <authorList>
            <person name="Jo K."/>
            <person name="Topal M.D."/>
        </authorList>
    </citation>
    <scope>FUNCTION</scope>
    <scope>SUBUNIT</scope>
    <scope>MUTAGENESIS OF LEU-43</scope>
</reference>
<reference key="4">
    <citation type="journal article" date="2003" name="Nucleic Acids Res.">
        <title>A nomenclature for restriction enzymes, DNA methyltransferases, homing endonucleases and their genes.</title>
        <authorList>
            <person name="Roberts R.J."/>
            <person name="Belfort M."/>
            <person name="Bestor T."/>
            <person name="Bhagwat A.S."/>
            <person name="Bickle T.A."/>
            <person name="Bitinaite J."/>
            <person name="Blumenthal R.M."/>
            <person name="Degtyarev S.K."/>
            <person name="Dryden D.T."/>
            <person name="Dybvig K."/>
            <person name="Firman K."/>
            <person name="Gromova E.S."/>
            <person name="Gumport R.I."/>
            <person name="Halford S.E."/>
            <person name="Hattman S."/>
            <person name="Heitman J."/>
            <person name="Hornby D.P."/>
            <person name="Janulaitis A."/>
            <person name="Jeltsch A."/>
            <person name="Josephsen J."/>
            <person name="Kiss A."/>
            <person name="Klaenhammer T.R."/>
            <person name="Kobayashi I."/>
            <person name="Kong H."/>
            <person name="Krueger D.H."/>
            <person name="Lacks S."/>
            <person name="Marinus M.G."/>
            <person name="Miyahara M."/>
            <person name="Morgan R.D."/>
            <person name="Murray N.E."/>
            <person name="Nagaraja V."/>
            <person name="Piekarowicz A."/>
            <person name="Pingoud A."/>
            <person name="Raleigh E."/>
            <person name="Rao D.N."/>
            <person name="Reich N."/>
            <person name="Repin V.E."/>
            <person name="Selker E.U."/>
            <person name="Shaw P.C."/>
            <person name="Stein D.C."/>
            <person name="Stoddard B.L."/>
            <person name="Szybalski W."/>
            <person name="Trautner T.A."/>
            <person name="Van Etten J.L."/>
            <person name="Vitor J.M."/>
            <person name="Wilson G.G."/>
            <person name="Xu S.Y."/>
        </authorList>
    </citation>
    <scope>NOMENCLATURE</scope>
    <scope>SUBTYPES</scope>
</reference>
<reference key="5">
    <citation type="journal article" date="2000" name="EMBO J.">
        <title>Crystal structure of NaeI-an evolutionary bridge between DNA endonuclease and topoisomerase.</title>
        <authorList>
            <person name="Huai Q."/>
            <person name="Colandene J.D."/>
            <person name="Chen Y."/>
            <person name="Luo F."/>
            <person name="Zhao Y."/>
            <person name="Topal M.D."/>
            <person name="Ke H."/>
        </authorList>
    </citation>
    <scope>X-RAY CRYSTALLOGRAPHY (2.38 ANGSTROMS)</scope>
</reference>
<keyword id="KW-0002">3D-structure</keyword>
<keyword id="KW-0255">Endonuclease</keyword>
<keyword id="KW-0378">Hydrolase</keyword>
<keyword id="KW-0540">Nuclease</keyword>
<keyword id="KW-0680">Restriction system</keyword>
<protein>
    <recommendedName>
        <fullName>Type II restriction enzyme NaeI</fullName>
        <shortName>R.NaeI</shortName>
        <ecNumber evidence="1">3.1.21.4</ecNumber>
    </recommendedName>
    <alternativeName>
        <fullName>Endonuclease NaeI</fullName>
    </alternativeName>
    <alternativeName>
        <fullName>Type-2 restriction enzyme NaeI</fullName>
    </alternativeName>
</protein>
<proteinExistence type="evidence at protein level"/>
<gene>
    <name evidence="4" type="primary">naeIR</name>
</gene>
<feature type="chain" id="PRO_0000077343" description="Type II restriction enzyme NaeI">
    <location>
        <begin position="1"/>
        <end position="317"/>
    </location>
</feature>
<feature type="mutagenesis site" description="Change of function; becomes a topoisomerase that recognizes single-stranded mismatched DNA." evidence="1 2">
    <original>L</original>
    <variation>K</variation>
    <location>
        <position position="43"/>
    </location>
</feature>
<feature type="helix" evidence="5">
    <location>
        <begin position="13"/>
        <end position="25"/>
    </location>
</feature>
<feature type="strand" evidence="5">
    <location>
        <begin position="26"/>
        <end position="29"/>
    </location>
</feature>
<feature type="helix" evidence="5">
    <location>
        <begin position="30"/>
        <end position="44"/>
    </location>
</feature>
<feature type="helix" evidence="5">
    <location>
        <begin position="46"/>
        <end position="49"/>
    </location>
</feature>
<feature type="helix" evidence="5">
    <location>
        <begin position="54"/>
        <end position="56"/>
    </location>
</feature>
<feature type="helix" evidence="5">
    <location>
        <begin position="59"/>
        <end position="63"/>
    </location>
</feature>
<feature type="helix" evidence="5">
    <location>
        <begin position="65"/>
        <end position="77"/>
    </location>
</feature>
<feature type="strand" evidence="5">
    <location>
        <begin position="83"/>
        <end position="89"/>
    </location>
</feature>
<feature type="strand" evidence="5">
    <location>
        <begin position="92"/>
        <end position="101"/>
    </location>
</feature>
<feature type="helix" evidence="5">
    <location>
        <begin position="109"/>
        <end position="111"/>
    </location>
</feature>
<feature type="strand" evidence="5">
    <location>
        <begin position="114"/>
        <end position="122"/>
    </location>
</feature>
<feature type="turn" evidence="5">
    <location>
        <begin position="123"/>
        <end position="126"/>
    </location>
</feature>
<feature type="strand" evidence="5">
    <location>
        <begin position="127"/>
        <end position="134"/>
    </location>
</feature>
<feature type="helix" evidence="5">
    <location>
        <begin position="137"/>
        <end position="139"/>
    </location>
</feature>
<feature type="helix" evidence="5">
    <location>
        <begin position="153"/>
        <end position="156"/>
    </location>
</feature>
<feature type="strand" evidence="5">
    <location>
        <begin position="160"/>
        <end position="163"/>
    </location>
</feature>
<feature type="helix" evidence="5">
    <location>
        <begin position="173"/>
        <end position="175"/>
    </location>
</feature>
<feature type="helix" evidence="5">
    <location>
        <begin position="179"/>
        <end position="186"/>
    </location>
</feature>
<feature type="strand" evidence="6">
    <location>
        <begin position="191"/>
        <end position="194"/>
    </location>
</feature>
<feature type="helix" evidence="5">
    <location>
        <begin position="196"/>
        <end position="207"/>
    </location>
</feature>
<feature type="strand" evidence="5">
    <location>
        <begin position="210"/>
        <end position="213"/>
    </location>
</feature>
<feature type="helix" evidence="5">
    <location>
        <begin position="215"/>
        <end position="222"/>
    </location>
</feature>
<feature type="helix" evidence="5">
    <location>
        <begin position="228"/>
        <end position="230"/>
    </location>
</feature>
<feature type="strand" evidence="5">
    <location>
        <begin position="232"/>
        <end position="241"/>
    </location>
</feature>
<feature type="helix" evidence="5">
    <location>
        <begin position="242"/>
        <end position="244"/>
    </location>
</feature>
<feature type="strand" evidence="5">
    <location>
        <begin position="246"/>
        <end position="249"/>
    </location>
</feature>
<feature type="helix" evidence="6">
    <location>
        <begin position="255"/>
        <end position="261"/>
    </location>
</feature>
<feature type="strand" evidence="5">
    <location>
        <begin position="262"/>
        <end position="264"/>
    </location>
</feature>
<feature type="strand" evidence="5">
    <location>
        <begin position="272"/>
        <end position="279"/>
    </location>
</feature>
<feature type="strand" evidence="5">
    <location>
        <begin position="288"/>
        <end position="298"/>
    </location>
</feature>
<evidence type="ECO:0000269" key="1">
    <source>
    </source>
</evidence>
<evidence type="ECO:0000269" key="2">
    <source>
    </source>
</evidence>
<evidence type="ECO:0000303" key="3">
    <source>
    </source>
</evidence>
<evidence type="ECO:0000303" key="4">
    <source>
    </source>
</evidence>
<evidence type="ECO:0007829" key="5">
    <source>
        <dbReference type="PDB" id="1EV7"/>
    </source>
</evidence>
<evidence type="ECO:0007829" key="6">
    <source>
        <dbReference type="PDB" id="1IAW"/>
    </source>
</evidence>
<name>T2N1_LENAE</name>
<sequence length="317" mass="35335">MTELPLQFAEPDDDLERVRATLYSLDPDGDRTAGVLRDTLDQLYDGQRTGRWNFDQLHKTEKTHMGTLVEINLHREFQFGDGFETDYEIAGVQVDCKFSMSQGAWMLPPESIGHICLVIWASDQQCAWTAGLVKVIPQFLGTANRDLKRRLTPEGRAQVVKLWPDHGKLQENLLLHIPGDVRDQIFSAKSSRGNQHGQARVNELFRRVHGRLIGRAVIATVAQQDDFMKRVRGSGGARSILRPEGIIILGHQDNDPKVANDLGLPVPRKGQVVAARVVPADEGDQRQTAEIQGRRWAVAVPGDPIVEAPVVPRKSAE</sequence>